<keyword id="KW-1003">Cell membrane</keyword>
<keyword id="KW-0472">Membrane</keyword>
<keyword id="KW-1185">Reference proteome</keyword>
<keyword id="KW-0812">Transmembrane</keyword>
<keyword id="KW-1133">Transmembrane helix</keyword>
<accession>Q6MAD8</accession>
<name>FLOA_PARUW</name>
<reference key="1">
    <citation type="journal article" date="2004" name="Science">
        <title>Illuminating the evolutionary history of chlamydiae.</title>
        <authorList>
            <person name="Horn M."/>
            <person name="Collingro A."/>
            <person name="Schmitz-Esser S."/>
            <person name="Beier C.L."/>
            <person name="Purkhold U."/>
            <person name="Fartmann B."/>
            <person name="Brandt P."/>
            <person name="Nyakatura G.J."/>
            <person name="Droege M."/>
            <person name="Frishman D."/>
            <person name="Rattei T."/>
            <person name="Mewes H.-W."/>
            <person name="Wagner M."/>
        </authorList>
    </citation>
    <scope>NUCLEOTIDE SEQUENCE [LARGE SCALE GENOMIC DNA]</scope>
    <source>
        <strain>UWE25</strain>
    </source>
</reference>
<organism>
    <name type="scientific">Protochlamydia amoebophila (strain UWE25)</name>
    <dbReference type="NCBI Taxonomy" id="264201"/>
    <lineage>
        <taxon>Bacteria</taxon>
        <taxon>Pseudomonadati</taxon>
        <taxon>Chlamydiota</taxon>
        <taxon>Chlamydiia</taxon>
        <taxon>Parachlamydiales</taxon>
        <taxon>Parachlamydiaceae</taxon>
        <taxon>Candidatus Protochlamydia</taxon>
    </lineage>
</organism>
<protein>
    <recommendedName>
        <fullName evidence="1">Flotillin-like protein FloA</fullName>
    </recommendedName>
</protein>
<dbReference type="EMBL" id="BX908798">
    <property type="protein sequence ID" value="CAF24461.1"/>
    <property type="molecule type" value="Genomic_DNA"/>
</dbReference>
<dbReference type="RefSeq" id="WP_011176282.1">
    <property type="nucleotide sequence ID" value="NC_005861.2"/>
</dbReference>
<dbReference type="SMR" id="Q6MAD8"/>
<dbReference type="STRING" id="264201.pc1737"/>
<dbReference type="eggNOG" id="COG4864">
    <property type="taxonomic scope" value="Bacteria"/>
</dbReference>
<dbReference type="HOGENOM" id="CLU_836378_0_0_0"/>
<dbReference type="Proteomes" id="UP000000529">
    <property type="component" value="Chromosome"/>
</dbReference>
<dbReference type="GO" id="GO:0045121">
    <property type="term" value="C:membrane raft"/>
    <property type="evidence" value="ECO:0007669"/>
    <property type="project" value="UniProtKB-SubCell"/>
</dbReference>
<dbReference type="GO" id="GO:0005886">
    <property type="term" value="C:plasma membrane"/>
    <property type="evidence" value="ECO:0007669"/>
    <property type="project" value="UniProtKB-SubCell"/>
</dbReference>
<dbReference type="HAMAP" id="MF_01562">
    <property type="entry name" value="FloA"/>
    <property type="match status" value="1"/>
</dbReference>
<dbReference type="InterPro" id="IPR022853">
    <property type="entry name" value="FloA"/>
</dbReference>
<dbReference type="NCBIfam" id="NF010186">
    <property type="entry name" value="PRK13665.1"/>
    <property type="match status" value="1"/>
</dbReference>
<dbReference type="Pfam" id="PF12127">
    <property type="entry name" value="FloA"/>
    <property type="match status" value="1"/>
</dbReference>
<sequence length="342" mass="37286">MSTLLLQNLLENGTEFYFFIFVLAIVLLIILSVIGKFISLWFQAFVSGTPIPLFNIIGMSLRKIPPREIVNARINLYKAGLKDIHVGDLETHYLAGGHVPNVVEALIAADKANIPLDWRRATAIDLAGRDIKAAVQTSVNPRVIDCPNHGGYITGVAKDGIQLNCRARVTVRTNIAQLVGGATEETIIARVGEGIVSAIGGSDTHKQVLESPQKISKLVLEKGLDSSTAFLILSIDIVEINLGENIGAKLRTDQAESDIRIAKAEAEKRRTMAVAQEQENLAKVRDMEAKLVEAQAAVPLAMAEAFRSGKLGIMDYQRIQNIQSDTDMRNALAKPDSDKKQN</sequence>
<comment type="function">
    <text evidence="1">Found in functional membrane microdomains (FMM) that may be equivalent to eukaryotic membrane rafts. FMMs are highly dynamic and increase in number as cells age. Flotillins are thought to be important factors in membrane fluidity.</text>
</comment>
<comment type="subunit">
    <text evidence="1">Homooligomerizes.</text>
</comment>
<comment type="subcellular location">
    <subcellularLocation>
        <location evidence="1">Cell membrane</location>
        <topology evidence="1">Multi-pass membrane protein</topology>
    </subcellularLocation>
    <subcellularLocation>
        <location evidence="1">Membrane raft</location>
        <topology evidence="1">Multi-pass membrane protein</topology>
    </subcellularLocation>
</comment>
<comment type="similarity">
    <text evidence="1">Belongs to the flotillin-like FloA family.</text>
</comment>
<feature type="chain" id="PRO_0000232556" description="Flotillin-like protein FloA">
    <location>
        <begin position="1"/>
        <end position="342"/>
    </location>
</feature>
<feature type="transmembrane region" description="Helical" evidence="1">
    <location>
        <begin position="18"/>
        <end position="38"/>
    </location>
</feature>
<feature type="transmembrane region" description="Helical" evidence="1">
    <location>
        <begin position="39"/>
        <end position="59"/>
    </location>
</feature>
<evidence type="ECO:0000255" key="1">
    <source>
        <dbReference type="HAMAP-Rule" id="MF_01562"/>
    </source>
</evidence>
<proteinExistence type="inferred from homology"/>
<gene>
    <name evidence="1" type="primary">floA</name>
    <name type="ordered locus">pc1737</name>
</gene>